<proteinExistence type="inferred from homology"/>
<gene>
    <name evidence="1" type="primary">trmD</name>
    <name type="ordered locus">BBR47_36130</name>
</gene>
<feature type="chain" id="PRO_1000147076" description="tRNA (guanine-N(1)-)-methyltransferase">
    <location>
        <begin position="1"/>
        <end position="243"/>
    </location>
</feature>
<feature type="binding site" evidence="1">
    <location>
        <position position="111"/>
    </location>
    <ligand>
        <name>S-adenosyl-L-methionine</name>
        <dbReference type="ChEBI" id="CHEBI:59789"/>
    </ligand>
</feature>
<feature type="binding site" evidence="1">
    <location>
        <begin position="131"/>
        <end position="136"/>
    </location>
    <ligand>
        <name>S-adenosyl-L-methionine</name>
        <dbReference type="ChEBI" id="CHEBI:59789"/>
    </ligand>
</feature>
<dbReference type="EC" id="2.1.1.228" evidence="1"/>
<dbReference type="EMBL" id="AP008955">
    <property type="protein sequence ID" value="BAH44590.1"/>
    <property type="molecule type" value="Genomic_DNA"/>
</dbReference>
<dbReference type="RefSeq" id="WP_015891887.1">
    <property type="nucleotide sequence ID" value="NC_012491.1"/>
</dbReference>
<dbReference type="SMR" id="C0ZFN1"/>
<dbReference type="STRING" id="358681.BBR47_36130"/>
<dbReference type="KEGG" id="bbe:BBR47_36130"/>
<dbReference type="eggNOG" id="COG0336">
    <property type="taxonomic scope" value="Bacteria"/>
</dbReference>
<dbReference type="HOGENOM" id="CLU_047363_0_1_9"/>
<dbReference type="Proteomes" id="UP000001877">
    <property type="component" value="Chromosome"/>
</dbReference>
<dbReference type="GO" id="GO:0005829">
    <property type="term" value="C:cytosol"/>
    <property type="evidence" value="ECO:0007669"/>
    <property type="project" value="TreeGrafter"/>
</dbReference>
<dbReference type="GO" id="GO:0052906">
    <property type="term" value="F:tRNA (guanine(37)-N1)-methyltransferase activity"/>
    <property type="evidence" value="ECO:0007669"/>
    <property type="project" value="UniProtKB-UniRule"/>
</dbReference>
<dbReference type="GO" id="GO:0002939">
    <property type="term" value="P:tRNA N1-guanine methylation"/>
    <property type="evidence" value="ECO:0007669"/>
    <property type="project" value="TreeGrafter"/>
</dbReference>
<dbReference type="CDD" id="cd18080">
    <property type="entry name" value="TrmD-like"/>
    <property type="match status" value="1"/>
</dbReference>
<dbReference type="FunFam" id="1.10.1270.20:FF:000001">
    <property type="entry name" value="tRNA (guanine-N(1)-)-methyltransferase"/>
    <property type="match status" value="1"/>
</dbReference>
<dbReference type="FunFam" id="3.40.1280.10:FF:000001">
    <property type="entry name" value="tRNA (guanine-N(1)-)-methyltransferase"/>
    <property type="match status" value="1"/>
</dbReference>
<dbReference type="Gene3D" id="3.40.1280.10">
    <property type="match status" value="1"/>
</dbReference>
<dbReference type="Gene3D" id="1.10.1270.20">
    <property type="entry name" value="tRNA(m1g37)methyltransferase, domain 2"/>
    <property type="match status" value="1"/>
</dbReference>
<dbReference type="HAMAP" id="MF_00605">
    <property type="entry name" value="TrmD"/>
    <property type="match status" value="1"/>
</dbReference>
<dbReference type="InterPro" id="IPR029028">
    <property type="entry name" value="Alpha/beta_knot_MTases"/>
</dbReference>
<dbReference type="InterPro" id="IPR023148">
    <property type="entry name" value="tRNA_m1G_MeTrfase_C_sf"/>
</dbReference>
<dbReference type="InterPro" id="IPR002649">
    <property type="entry name" value="tRNA_m1G_MeTrfase_TrmD"/>
</dbReference>
<dbReference type="InterPro" id="IPR029026">
    <property type="entry name" value="tRNA_m1G_MTases_N"/>
</dbReference>
<dbReference type="InterPro" id="IPR016009">
    <property type="entry name" value="tRNA_MeTrfase_TRMD/TRM10"/>
</dbReference>
<dbReference type="NCBIfam" id="NF000648">
    <property type="entry name" value="PRK00026.1"/>
    <property type="match status" value="1"/>
</dbReference>
<dbReference type="NCBIfam" id="TIGR00088">
    <property type="entry name" value="trmD"/>
    <property type="match status" value="1"/>
</dbReference>
<dbReference type="PANTHER" id="PTHR46417">
    <property type="entry name" value="TRNA (GUANINE-N(1)-)-METHYLTRANSFERASE"/>
    <property type="match status" value="1"/>
</dbReference>
<dbReference type="PANTHER" id="PTHR46417:SF1">
    <property type="entry name" value="TRNA (GUANINE-N(1)-)-METHYLTRANSFERASE"/>
    <property type="match status" value="1"/>
</dbReference>
<dbReference type="Pfam" id="PF01746">
    <property type="entry name" value="tRNA_m1G_MT"/>
    <property type="match status" value="1"/>
</dbReference>
<dbReference type="PIRSF" id="PIRSF000386">
    <property type="entry name" value="tRNA_mtase"/>
    <property type="match status" value="1"/>
</dbReference>
<dbReference type="SUPFAM" id="SSF75217">
    <property type="entry name" value="alpha/beta knot"/>
    <property type="match status" value="1"/>
</dbReference>
<accession>C0ZFN1</accession>
<sequence>MRIDIFTLFPEMFTGVLSSSILGKASEKELVDFHVTNFRDFSESKHGTVDDTPYGGGGGMVLKPEPLFRAVEGLTGEKKPRVILMCPQGVPYHQKLAEELAQEEHLVFICGHYEGYDERIREHLVTDEISIGDYVLTGGELAAMVVIDSVVRLQPGALGNQTSAVEDSFSTGLLEYPHYTRPAEFRGWKVPDVLLSGHHANIESWRLKESLRRTKARRPDLLEKLALTDEMKKLLAELEQEKK</sequence>
<keyword id="KW-0963">Cytoplasm</keyword>
<keyword id="KW-0489">Methyltransferase</keyword>
<keyword id="KW-1185">Reference proteome</keyword>
<keyword id="KW-0949">S-adenosyl-L-methionine</keyword>
<keyword id="KW-0808">Transferase</keyword>
<keyword id="KW-0819">tRNA processing</keyword>
<comment type="function">
    <text evidence="1">Specifically methylates guanosine-37 in various tRNAs.</text>
</comment>
<comment type="catalytic activity">
    <reaction evidence="1">
        <text>guanosine(37) in tRNA + S-adenosyl-L-methionine = N(1)-methylguanosine(37) in tRNA + S-adenosyl-L-homocysteine + H(+)</text>
        <dbReference type="Rhea" id="RHEA:36899"/>
        <dbReference type="Rhea" id="RHEA-COMP:10145"/>
        <dbReference type="Rhea" id="RHEA-COMP:10147"/>
        <dbReference type="ChEBI" id="CHEBI:15378"/>
        <dbReference type="ChEBI" id="CHEBI:57856"/>
        <dbReference type="ChEBI" id="CHEBI:59789"/>
        <dbReference type="ChEBI" id="CHEBI:73542"/>
        <dbReference type="ChEBI" id="CHEBI:74269"/>
        <dbReference type="EC" id="2.1.1.228"/>
    </reaction>
</comment>
<comment type="subunit">
    <text evidence="1">Homodimer.</text>
</comment>
<comment type="subcellular location">
    <subcellularLocation>
        <location evidence="1">Cytoplasm</location>
    </subcellularLocation>
</comment>
<comment type="similarity">
    <text evidence="1">Belongs to the RNA methyltransferase TrmD family.</text>
</comment>
<reference key="1">
    <citation type="submission" date="2005-03" db="EMBL/GenBank/DDBJ databases">
        <title>Brevibacillus brevis strain 47, complete genome.</title>
        <authorList>
            <person name="Hosoyama A."/>
            <person name="Yamada R."/>
            <person name="Hongo Y."/>
            <person name="Terui Y."/>
            <person name="Ankai A."/>
            <person name="Masuyama W."/>
            <person name="Sekiguchi M."/>
            <person name="Takeda T."/>
            <person name="Asano K."/>
            <person name="Ohji S."/>
            <person name="Ichikawa N."/>
            <person name="Narita S."/>
            <person name="Aoki N."/>
            <person name="Miura H."/>
            <person name="Matsushita S."/>
            <person name="Sekigawa T."/>
            <person name="Yamagata H."/>
            <person name="Yoshikawa H."/>
            <person name="Udaka S."/>
            <person name="Tanikawa S."/>
            <person name="Fujita N."/>
        </authorList>
    </citation>
    <scope>NUCLEOTIDE SEQUENCE [LARGE SCALE GENOMIC DNA]</scope>
    <source>
        <strain>47 / JCM 6285 / NBRC 100599</strain>
    </source>
</reference>
<organism>
    <name type="scientific">Brevibacillus brevis (strain 47 / JCM 6285 / NBRC 100599)</name>
    <dbReference type="NCBI Taxonomy" id="358681"/>
    <lineage>
        <taxon>Bacteria</taxon>
        <taxon>Bacillati</taxon>
        <taxon>Bacillota</taxon>
        <taxon>Bacilli</taxon>
        <taxon>Bacillales</taxon>
        <taxon>Paenibacillaceae</taxon>
        <taxon>Brevibacillus</taxon>
    </lineage>
</organism>
<evidence type="ECO:0000255" key="1">
    <source>
        <dbReference type="HAMAP-Rule" id="MF_00605"/>
    </source>
</evidence>
<protein>
    <recommendedName>
        <fullName evidence="1">tRNA (guanine-N(1)-)-methyltransferase</fullName>
        <ecNumber evidence="1">2.1.1.228</ecNumber>
    </recommendedName>
    <alternativeName>
        <fullName evidence="1">M1G-methyltransferase</fullName>
    </alternativeName>
    <alternativeName>
        <fullName evidence="1">tRNA [GM37] methyltransferase</fullName>
    </alternativeName>
</protein>
<name>TRMD_BREBN</name>